<keyword id="KW-1015">Disulfide bond</keyword>
<keyword id="KW-0325">Glycoprotein</keyword>
<keyword id="KW-0433">Leucine-rich repeat</keyword>
<keyword id="KW-0654">Proteoglycan</keyword>
<keyword id="KW-1267">Proteomics identification</keyword>
<keyword id="KW-1185">Reference proteome</keyword>
<keyword id="KW-0677">Repeat</keyword>
<keyword id="KW-0964">Secreted</keyword>
<keyword id="KW-0732">Signal</keyword>
<gene>
    <name type="primary">MXRA5</name>
</gene>
<name>MXRA5_HUMAN</name>
<dbReference type="EMBL" id="AF245505">
    <property type="protein sequence ID" value="AAF86402.1"/>
    <property type="molecule type" value="mRNA"/>
</dbReference>
<dbReference type="EMBL" id="AC004616">
    <property type="status" value="NOT_ANNOTATED_CDS"/>
    <property type="molecule type" value="Genomic_DNA"/>
</dbReference>
<dbReference type="EMBL" id="BC011846">
    <property type="protein sequence ID" value="AAH11846.1"/>
    <property type="status" value="ALT_SEQ"/>
    <property type="molecule type" value="mRNA"/>
</dbReference>
<dbReference type="EMBL" id="BC064986">
    <property type="protein sequence ID" value="AAH64986.1"/>
    <property type="status" value="ALT_SEQ"/>
    <property type="molecule type" value="mRNA"/>
</dbReference>
<dbReference type="EMBL" id="BC080586">
    <property type="protein sequence ID" value="AAH80586.1"/>
    <property type="status" value="ALT_SEQ"/>
    <property type="molecule type" value="mRNA"/>
</dbReference>
<dbReference type="EMBL" id="AL049946">
    <property type="protein sequence ID" value="CAB43220.1"/>
    <property type="molecule type" value="mRNA"/>
</dbReference>
<dbReference type="CCDS" id="CCDS14124.1"/>
<dbReference type="PIR" id="T08678">
    <property type="entry name" value="T08678"/>
</dbReference>
<dbReference type="RefSeq" id="NP_056234.2">
    <property type="nucleotide sequence ID" value="NM_015419.4"/>
</dbReference>
<dbReference type="BioGRID" id="117392">
    <property type="interactions" value="9"/>
</dbReference>
<dbReference type="FunCoup" id="Q9NR99">
    <property type="interactions" value="45"/>
</dbReference>
<dbReference type="IntAct" id="Q9NR99">
    <property type="interactions" value="4"/>
</dbReference>
<dbReference type="STRING" id="9606.ENSP00000217939"/>
<dbReference type="GlyConnect" id="1495">
    <property type="glycosylation" value="24 N-Linked glycans (7 sites)"/>
</dbReference>
<dbReference type="GlyCosmos" id="Q9NR99">
    <property type="glycosylation" value="24 sites, 27 glycans"/>
</dbReference>
<dbReference type="GlyGen" id="Q9NR99">
    <property type="glycosylation" value="36 sites, 53 N-linked glycans (9 sites), 6 O-linked glycans (21 sites)"/>
</dbReference>
<dbReference type="iPTMnet" id="Q9NR99"/>
<dbReference type="PhosphoSitePlus" id="Q9NR99"/>
<dbReference type="BioMuta" id="MXRA5"/>
<dbReference type="DMDM" id="317373412"/>
<dbReference type="jPOST" id="Q9NR99"/>
<dbReference type="MassIVE" id="Q9NR99"/>
<dbReference type="PaxDb" id="9606-ENSP00000217939"/>
<dbReference type="PeptideAtlas" id="Q9NR99"/>
<dbReference type="ProteomicsDB" id="82314"/>
<dbReference type="Pumba" id="Q9NR99"/>
<dbReference type="Antibodypedia" id="362">
    <property type="antibodies" value="70 antibodies from 22 providers"/>
</dbReference>
<dbReference type="DNASU" id="25878"/>
<dbReference type="Ensembl" id="ENST00000217939.7">
    <property type="protein sequence ID" value="ENSP00000217939.5"/>
    <property type="gene ID" value="ENSG00000101825.8"/>
</dbReference>
<dbReference type="GeneID" id="25878"/>
<dbReference type="KEGG" id="hsa:25878"/>
<dbReference type="MANE-Select" id="ENST00000217939.7">
    <property type="protein sequence ID" value="ENSP00000217939.5"/>
    <property type="RefSeq nucleotide sequence ID" value="NM_015419.4"/>
    <property type="RefSeq protein sequence ID" value="NP_056234.2"/>
</dbReference>
<dbReference type="UCSC" id="uc004crg.6">
    <property type="organism name" value="human"/>
</dbReference>
<dbReference type="AGR" id="HGNC:7539"/>
<dbReference type="CTD" id="25878"/>
<dbReference type="DisGeNET" id="25878"/>
<dbReference type="GeneCards" id="MXRA5"/>
<dbReference type="HGNC" id="HGNC:7539">
    <property type="gene designation" value="MXRA5"/>
</dbReference>
<dbReference type="HPA" id="ENSG00000101825">
    <property type="expression patterns" value="Tissue enhanced (cervix)"/>
</dbReference>
<dbReference type="MalaCards" id="MXRA5"/>
<dbReference type="MIM" id="211980">
    <property type="type" value="phenotype"/>
</dbReference>
<dbReference type="MIM" id="300938">
    <property type="type" value="gene"/>
</dbReference>
<dbReference type="neXtProt" id="NX_Q9NR99"/>
<dbReference type="OpenTargets" id="ENSG00000101825"/>
<dbReference type="PharmGKB" id="PA31340"/>
<dbReference type="VEuPathDB" id="HostDB:ENSG00000101825"/>
<dbReference type="eggNOG" id="KOG0619">
    <property type="taxonomic scope" value="Eukaryota"/>
</dbReference>
<dbReference type="GeneTree" id="ENSGT00940000159942"/>
<dbReference type="HOGENOM" id="CLU_000580_0_0_1"/>
<dbReference type="InParanoid" id="Q9NR99"/>
<dbReference type="OMA" id="KMNCMAM"/>
<dbReference type="OrthoDB" id="676979at2759"/>
<dbReference type="PAN-GO" id="Q9NR99">
    <property type="GO annotations" value="2 GO annotations based on evolutionary models"/>
</dbReference>
<dbReference type="PhylomeDB" id="Q9NR99"/>
<dbReference type="TreeFam" id="TF326318"/>
<dbReference type="PathwayCommons" id="Q9NR99"/>
<dbReference type="SignaLink" id="Q9NR99"/>
<dbReference type="BioGRID-ORCS" id="25878">
    <property type="hits" value="8 hits in 771 CRISPR screens"/>
</dbReference>
<dbReference type="ChiTaRS" id="MXRA5">
    <property type="organism name" value="human"/>
</dbReference>
<dbReference type="GeneWiki" id="MXRA5"/>
<dbReference type="GenomeRNAi" id="25878"/>
<dbReference type="Pharos" id="Q9NR99">
    <property type="development level" value="Tbio"/>
</dbReference>
<dbReference type="PRO" id="PR:Q9NR99"/>
<dbReference type="Proteomes" id="UP000005640">
    <property type="component" value="Chromosome X"/>
</dbReference>
<dbReference type="RNAct" id="Q9NR99">
    <property type="molecule type" value="protein"/>
</dbReference>
<dbReference type="Bgee" id="ENSG00000101825">
    <property type="expression patterns" value="Expressed in tendon of biceps brachii and 174 other cell types or tissues"/>
</dbReference>
<dbReference type="GO" id="GO:0062023">
    <property type="term" value="C:collagen-containing extracellular matrix"/>
    <property type="evidence" value="ECO:0007005"/>
    <property type="project" value="BHF-UCL"/>
</dbReference>
<dbReference type="GO" id="GO:0070062">
    <property type="term" value="C:extracellular exosome"/>
    <property type="evidence" value="ECO:0007005"/>
    <property type="project" value="UniProtKB"/>
</dbReference>
<dbReference type="GO" id="GO:0005201">
    <property type="term" value="F:extracellular matrix structural constituent"/>
    <property type="evidence" value="ECO:0007005"/>
    <property type="project" value="BHF-UCL"/>
</dbReference>
<dbReference type="GO" id="GO:0071559">
    <property type="term" value="P:response to transforming growth factor beta"/>
    <property type="evidence" value="ECO:0000315"/>
    <property type="project" value="UniProtKB"/>
</dbReference>
<dbReference type="CDD" id="cd00096">
    <property type="entry name" value="Ig"/>
    <property type="match status" value="4"/>
</dbReference>
<dbReference type="FunFam" id="2.60.40.10:FF:000621">
    <property type="entry name" value="Immunoglobulin superfamily member 10"/>
    <property type="match status" value="1"/>
</dbReference>
<dbReference type="FunFam" id="3.80.10.10:FF:000103">
    <property type="entry name" value="Immunoglobulin superfamily member 10"/>
    <property type="match status" value="1"/>
</dbReference>
<dbReference type="FunFam" id="2.60.40.10:FF:000537">
    <property type="entry name" value="immunoglobulin superfamily member 10"/>
    <property type="match status" value="1"/>
</dbReference>
<dbReference type="FunFam" id="2.60.40.10:FF:001017">
    <property type="entry name" value="Matrix remodeling associated 5"/>
    <property type="match status" value="1"/>
</dbReference>
<dbReference type="FunFam" id="2.60.40.10:FF:001146">
    <property type="entry name" value="Matrix remodeling associated 5"/>
    <property type="match status" value="1"/>
</dbReference>
<dbReference type="FunFam" id="2.60.40.10:FF:001248">
    <property type="entry name" value="Matrix remodeling associated 5"/>
    <property type="match status" value="1"/>
</dbReference>
<dbReference type="FunFam" id="2.60.40.10:FF:001290">
    <property type="entry name" value="Matrix remodeling associated 5"/>
    <property type="match status" value="1"/>
</dbReference>
<dbReference type="FunFam" id="2.60.40.10:FF:001306">
    <property type="entry name" value="Matrix remodeling associated 5"/>
    <property type="match status" value="1"/>
</dbReference>
<dbReference type="FunFam" id="2.60.40.10:FF:001377">
    <property type="entry name" value="Matrix remodeling associated 5"/>
    <property type="match status" value="1"/>
</dbReference>
<dbReference type="FunFam" id="2.60.40.10:FF:001402">
    <property type="entry name" value="Matrix remodeling associated 5"/>
    <property type="match status" value="1"/>
</dbReference>
<dbReference type="FunFam" id="2.60.40.10:FF:001433">
    <property type="entry name" value="Matrix remodeling associated 5"/>
    <property type="match status" value="1"/>
</dbReference>
<dbReference type="FunFam" id="2.60.40.10:FF:001502">
    <property type="entry name" value="Matrix remodeling associated 5"/>
    <property type="match status" value="1"/>
</dbReference>
<dbReference type="FunFam" id="2.60.40.10:FF:002119">
    <property type="entry name" value="Matrix remodeling associated 5"/>
    <property type="match status" value="1"/>
</dbReference>
<dbReference type="FunFam" id="3.80.10.10:FF:000322">
    <property type="entry name" value="Matrix remodeling associated 5"/>
    <property type="match status" value="1"/>
</dbReference>
<dbReference type="Gene3D" id="2.60.40.10">
    <property type="entry name" value="Immunoglobulins"/>
    <property type="match status" value="12"/>
</dbReference>
<dbReference type="Gene3D" id="3.80.10.10">
    <property type="entry name" value="Ribonuclease Inhibitor"/>
    <property type="match status" value="2"/>
</dbReference>
<dbReference type="InterPro" id="IPR000483">
    <property type="entry name" value="Cys-rich_flank_reg_C"/>
</dbReference>
<dbReference type="InterPro" id="IPR007110">
    <property type="entry name" value="Ig-like_dom"/>
</dbReference>
<dbReference type="InterPro" id="IPR036179">
    <property type="entry name" value="Ig-like_dom_sf"/>
</dbReference>
<dbReference type="InterPro" id="IPR013783">
    <property type="entry name" value="Ig-like_fold"/>
</dbReference>
<dbReference type="InterPro" id="IPR013098">
    <property type="entry name" value="Ig_I-set"/>
</dbReference>
<dbReference type="InterPro" id="IPR003599">
    <property type="entry name" value="Ig_sub"/>
</dbReference>
<dbReference type="InterPro" id="IPR003598">
    <property type="entry name" value="Ig_sub2"/>
</dbReference>
<dbReference type="InterPro" id="IPR001611">
    <property type="entry name" value="Leu-rich_rpt"/>
</dbReference>
<dbReference type="InterPro" id="IPR003591">
    <property type="entry name" value="Leu-rich_rpt_typical-subtyp"/>
</dbReference>
<dbReference type="InterPro" id="IPR050467">
    <property type="entry name" value="LRFN"/>
</dbReference>
<dbReference type="InterPro" id="IPR032675">
    <property type="entry name" value="LRR_dom_sf"/>
</dbReference>
<dbReference type="InterPro" id="IPR000372">
    <property type="entry name" value="LRRNT"/>
</dbReference>
<dbReference type="PANTHER" id="PTHR45842:SF25">
    <property type="entry name" value="CARBOXYPEPTIDASE N SUBUNIT 2-LIKE"/>
    <property type="match status" value="1"/>
</dbReference>
<dbReference type="PANTHER" id="PTHR45842">
    <property type="entry name" value="SYNAPTIC ADHESION-LIKE MOLECULE SALM"/>
    <property type="match status" value="1"/>
</dbReference>
<dbReference type="Pfam" id="PF07679">
    <property type="entry name" value="I-set"/>
    <property type="match status" value="6"/>
</dbReference>
<dbReference type="Pfam" id="PF13927">
    <property type="entry name" value="Ig_3"/>
    <property type="match status" value="5"/>
</dbReference>
<dbReference type="Pfam" id="PF13855">
    <property type="entry name" value="LRR_8"/>
    <property type="match status" value="1"/>
</dbReference>
<dbReference type="SMART" id="SM00409">
    <property type="entry name" value="IG"/>
    <property type="match status" value="12"/>
</dbReference>
<dbReference type="SMART" id="SM00408">
    <property type="entry name" value="IGc2"/>
    <property type="match status" value="12"/>
</dbReference>
<dbReference type="SMART" id="SM00369">
    <property type="entry name" value="LRR_TYP"/>
    <property type="match status" value="6"/>
</dbReference>
<dbReference type="SMART" id="SM00082">
    <property type="entry name" value="LRRCT"/>
    <property type="match status" value="1"/>
</dbReference>
<dbReference type="SMART" id="SM00013">
    <property type="entry name" value="LRRNT"/>
    <property type="match status" value="1"/>
</dbReference>
<dbReference type="SUPFAM" id="SSF48726">
    <property type="entry name" value="Immunoglobulin"/>
    <property type="match status" value="12"/>
</dbReference>
<dbReference type="SUPFAM" id="SSF52058">
    <property type="entry name" value="L domain-like"/>
    <property type="match status" value="1"/>
</dbReference>
<dbReference type="PROSITE" id="PS50835">
    <property type="entry name" value="IG_LIKE"/>
    <property type="match status" value="12"/>
</dbReference>
<accession>Q9NR99</accession>
<accession>Q6P1M7</accession>
<accession>Q9Y3Y8</accession>
<reference key="1">
    <citation type="submission" date="2000-03" db="EMBL/GenBank/DDBJ databases">
        <title>Identification of the gene encoding adlican, a novel protein expressed in human arthritic tissues.</title>
        <authorList>
            <person name="Crowl R.M."/>
            <person name="Luk D."/>
        </authorList>
    </citation>
    <scope>NUCLEOTIDE SEQUENCE [MRNA]</scope>
    <scope>VARIANTS VAL-824; VAL-1128; ASP-1394; SER-2000 AND VAL-2531</scope>
    <source>
        <tissue>Placenta</tissue>
    </source>
</reference>
<reference key="2">
    <citation type="journal article" date="2004" name="Biogerontology">
        <title>Cloning of differentially expressed genes in skin fibroblasts from centenarians.</title>
        <authorList>
            <person name="Chondrogianni N."/>
            <person name="Simoes D.C.M."/>
            <person name="Franceschi C."/>
            <person name="Gonos E.S."/>
        </authorList>
    </citation>
    <scope>NUCLEOTIDE SEQUENCE [MRNA]</scope>
    <scope>DEVELOPMENTAL STAGE</scope>
</reference>
<reference key="3">
    <citation type="journal article" date="2005" name="Nature">
        <title>The DNA sequence of the human X chromosome.</title>
        <authorList>
            <person name="Ross M.T."/>
            <person name="Grafham D.V."/>
            <person name="Coffey A.J."/>
            <person name="Scherer S."/>
            <person name="McLay K."/>
            <person name="Muzny D."/>
            <person name="Platzer M."/>
            <person name="Howell G.R."/>
            <person name="Burrows C."/>
            <person name="Bird C.P."/>
            <person name="Frankish A."/>
            <person name="Lovell F.L."/>
            <person name="Howe K.L."/>
            <person name="Ashurst J.L."/>
            <person name="Fulton R.S."/>
            <person name="Sudbrak R."/>
            <person name="Wen G."/>
            <person name="Jones M.C."/>
            <person name="Hurles M.E."/>
            <person name="Andrews T.D."/>
            <person name="Scott C.E."/>
            <person name="Searle S."/>
            <person name="Ramser J."/>
            <person name="Whittaker A."/>
            <person name="Deadman R."/>
            <person name="Carter N.P."/>
            <person name="Hunt S.E."/>
            <person name="Chen R."/>
            <person name="Cree A."/>
            <person name="Gunaratne P."/>
            <person name="Havlak P."/>
            <person name="Hodgson A."/>
            <person name="Metzker M.L."/>
            <person name="Richards S."/>
            <person name="Scott G."/>
            <person name="Steffen D."/>
            <person name="Sodergren E."/>
            <person name="Wheeler D.A."/>
            <person name="Worley K.C."/>
            <person name="Ainscough R."/>
            <person name="Ambrose K.D."/>
            <person name="Ansari-Lari M.A."/>
            <person name="Aradhya S."/>
            <person name="Ashwell R.I."/>
            <person name="Babbage A.K."/>
            <person name="Bagguley C.L."/>
            <person name="Ballabio A."/>
            <person name="Banerjee R."/>
            <person name="Barker G.E."/>
            <person name="Barlow K.F."/>
            <person name="Barrett I.P."/>
            <person name="Bates K.N."/>
            <person name="Beare D.M."/>
            <person name="Beasley H."/>
            <person name="Beasley O."/>
            <person name="Beck A."/>
            <person name="Bethel G."/>
            <person name="Blechschmidt K."/>
            <person name="Brady N."/>
            <person name="Bray-Allen S."/>
            <person name="Bridgeman A.M."/>
            <person name="Brown A.J."/>
            <person name="Brown M.J."/>
            <person name="Bonnin D."/>
            <person name="Bruford E.A."/>
            <person name="Buhay C."/>
            <person name="Burch P."/>
            <person name="Burford D."/>
            <person name="Burgess J."/>
            <person name="Burrill W."/>
            <person name="Burton J."/>
            <person name="Bye J.M."/>
            <person name="Carder C."/>
            <person name="Carrel L."/>
            <person name="Chako J."/>
            <person name="Chapman J.C."/>
            <person name="Chavez D."/>
            <person name="Chen E."/>
            <person name="Chen G."/>
            <person name="Chen Y."/>
            <person name="Chen Z."/>
            <person name="Chinault C."/>
            <person name="Ciccodicola A."/>
            <person name="Clark S.Y."/>
            <person name="Clarke G."/>
            <person name="Clee C.M."/>
            <person name="Clegg S."/>
            <person name="Clerc-Blankenburg K."/>
            <person name="Clifford K."/>
            <person name="Cobley V."/>
            <person name="Cole C.G."/>
            <person name="Conquer J.S."/>
            <person name="Corby N."/>
            <person name="Connor R.E."/>
            <person name="David R."/>
            <person name="Davies J."/>
            <person name="Davis C."/>
            <person name="Davis J."/>
            <person name="Delgado O."/>
            <person name="Deshazo D."/>
            <person name="Dhami P."/>
            <person name="Ding Y."/>
            <person name="Dinh H."/>
            <person name="Dodsworth S."/>
            <person name="Draper H."/>
            <person name="Dugan-Rocha S."/>
            <person name="Dunham A."/>
            <person name="Dunn M."/>
            <person name="Durbin K.J."/>
            <person name="Dutta I."/>
            <person name="Eades T."/>
            <person name="Ellwood M."/>
            <person name="Emery-Cohen A."/>
            <person name="Errington H."/>
            <person name="Evans K.L."/>
            <person name="Faulkner L."/>
            <person name="Francis F."/>
            <person name="Frankland J."/>
            <person name="Fraser A.E."/>
            <person name="Galgoczy P."/>
            <person name="Gilbert J."/>
            <person name="Gill R."/>
            <person name="Gloeckner G."/>
            <person name="Gregory S.G."/>
            <person name="Gribble S."/>
            <person name="Griffiths C."/>
            <person name="Grocock R."/>
            <person name="Gu Y."/>
            <person name="Gwilliam R."/>
            <person name="Hamilton C."/>
            <person name="Hart E.A."/>
            <person name="Hawes A."/>
            <person name="Heath P.D."/>
            <person name="Heitmann K."/>
            <person name="Hennig S."/>
            <person name="Hernandez J."/>
            <person name="Hinzmann B."/>
            <person name="Ho S."/>
            <person name="Hoffs M."/>
            <person name="Howden P.J."/>
            <person name="Huckle E.J."/>
            <person name="Hume J."/>
            <person name="Hunt P.J."/>
            <person name="Hunt A.R."/>
            <person name="Isherwood J."/>
            <person name="Jacob L."/>
            <person name="Johnson D."/>
            <person name="Jones S."/>
            <person name="de Jong P.J."/>
            <person name="Joseph S.S."/>
            <person name="Keenan S."/>
            <person name="Kelly S."/>
            <person name="Kershaw J.K."/>
            <person name="Khan Z."/>
            <person name="Kioschis P."/>
            <person name="Klages S."/>
            <person name="Knights A.J."/>
            <person name="Kosiura A."/>
            <person name="Kovar-Smith C."/>
            <person name="Laird G.K."/>
            <person name="Langford C."/>
            <person name="Lawlor S."/>
            <person name="Leversha M."/>
            <person name="Lewis L."/>
            <person name="Liu W."/>
            <person name="Lloyd C."/>
            <person name="Lloyd D.M."/>
            <person name="Loulseged H."/>
            <person name="Loveland J.E."/>
            <person name="Lovell J.D."/>
            <person name="Lozado R."/>
            <person name="Lu J."/>
            <person name="Lyne R."/>
            <person name="Ma J."/>
            <person name="Maheshwari M."/>
            <person name="Matthews L.H."/>
            <person name="McDowall J."/>
            <person name="McLaren S."/>
            <person name="McMurray A."/>
            <person name="Meidl P."/>
            <person name="Meitinger T."/>
            <person name="Milne S."/>
            <person name="Miner G."/>
            <person name="Mistry S.L."/>
            <person name="Morgan M."/>
            <person name="Morris S."/>
            <person name="Mueller I."/>
            <person name="Mullikin J.C."/>
            <person name="Nguyen N."/>
            <person name="Nordsiek G."/>
            <person name="Nyakatura G."/>
            <person name="O'dell C.N."/>
            <person name="Okwuonu G."/>
            <person name="Palmer S."/>
            <person name="Pandian R."/>
            <person name="Parker D."/>
            <person name="Parrish J."/>
            <person name="Pasternak S."/>
            <person name="Patel D."/>
            <person name="Pearce A.V."/>
            <person name="Pearson D.M."/>
            <person name="Pelan S.E."/>
            <person name="Perez L."/>
            <person name="Porter K.M."/>
            <person name="Ramsey Y."/>
            <person name="Reichwald K."/>
            <person name="Rhodes S."/>
            <person name="Ridler K.A."/>
            <person name="Schlessinger D."/>
            <person name="Schueler M.G."/>
            <person name="Sehra H.K."/>
            <person name="Shaw-Smith C."/>
            <person name="Shen H."/>
            <person name="Sheridan E.M."/>
            <person name="Shownkeen R."/>
            <person name="Skuce C.D."/>
            <person name="Smith M.L."/>
            <person name="Sotheran E.C."/>
            <person name="Steingruber H.E."/>
            <person name="Steward C.A."/>
            <person name="Storey R."/>
            <person name="Swann R.M."/>
            <person name="Swarbreck D."/>
            <person name="Tabor P.E."/>
            <person name="Taudien S."/>
            <person name="Taylor T."/>
            <person name="Teague B."/>
            <person name="Thomas K."/>
            <person name="Thorpe A."/>
            <person name="Timms K."/>
            <person name="Tracey A."/>
            <person name="Trevanion S."/>
            <person name="Tromans A.C."/>
            <person name="d'Urso M."/>
            <person name="Verduzco D."/>
            <person name="Villasana D."/>
            <person name="Waldron L."/>
            <person name="Wall M."/>
            <person name="Wang Q."/>
            <person name="Warren J."/>
            <person name="Warry G.L."/>
            <person name="Wei X."/>
            <person name="West A."/>
            <person name="Whitehead S.L."/>
            <person name="Whiteley M.N."/>
            <person name="Wilkinson J.E."/>
            <person name="Willey D.L."/>
            <person name="Williams G."/>
            <person name="Williams L."/>
            <person name="Williamson A."/>
            <person name="Williamson H."/>
            <person name="Wilming L."/>
            <person name="Woodmansey R.L."/>
            <person name="Wray P.W."/>
            <person name="Yen J."/>
            <person name="Zhang J."/>
            <person name="Zhou J."/>
            <person name="Zoghbi H."/>
            <person name="Zorilla S."/>
            <person name="Buck D."/>
            <person name="Reinhardt R."/>
            <person name="Poustka A."/>
            <person name="Rosenthal A."/>
            <person name="Lehrach H."/>
            <person name="Meindl A."/>
            <person name="Minx P.J."/>
            <person name="Hillier L.W."/>
            <person name="Willard H.F."/>
            <person name="Wilson R.K."/>
            <person name="Waterston R.H."/>
            <person name="Rice C.M."/>
            <person name="Vaudin M."/>
            <person name="Coulson A."/>
            <person name="Nelson D.L."/>
            <person name="Weinstock G."/>
            <person name="Sulston J.E."/>
            <person name="Durbin R.M."/>
            <person name="Hubbard T."/>
            <person name="Gibbs R.A."/>
            <person name="Beck S."/>
            <person name="Rogers J."/>
            <person name="Bentley D.R."/>
        </authorList>
    </citation>
    <scope>NUCLEOTIDE SEQUENCE [LARGE SCALE GENOMIC DNA]</scope>
</reference>
<reference key="4">
    <citation type="journal article" date="2004" name="Genome Res.">
        <title>The status, quality, and expansion of the NIH full-length cDNA project: the Mammalian Gene Collection (MGC).</title>
        <authorList>
            <consortium name="The MGC Project Team"/>
        </authorList>
    </citation>
    <scope>NUCLEOTIDE SEQUENCE [LARGE SCALE MRNA] OF 1-739</scope>
    <source>
        <tissue>Muscle</tissue>
    </source>
</reference>
<reference key="5">
    <citation type="journal article" date="2007" name="BMC Genomics">
        <title>The full-ORF clone resource of the German cDNA consortium.</title>
        <authorList>
            <person name="Bechtel S."/>
            <person name="Rosenfelder H."/>
            <person name="Duda A."/>
            <person name="Schmidt C.P."/>
            <person name="Ernst U."/>
            <person name="Wellenreuther R."/>
            <person name="Mehrle A."/>
            <person name="Schuster C."/>
            <person name="Bahr A."/>
            <person name="Bloecker H."/>
            <person name="Heubner D."/>
            <person name="Hoerlein A."/>
            <person name="Michel G."/>
            <person name="Wedler H."/>
            <person name="Koehrer K."/>
            <person name="Ottenwaelder B."/>
            <person name="Poustka A."/>
            <person name="Wiemann S."/>
            <person name="Schupp I."/>
        </authorList>
    </citation>
    <scope>NUCLEOTIDE SEQUENCE [LARGE SCALE MRNA] OF 2245-2828</scope>
    <source>
        <tissue>Brain</tissue>
    </source>
</reference>
<reference key="6">
    <citation type="journal article" date="2015" name="Mol. Cell. Proteomics">
        <title>Identification of chondroitin sulfate linkage region glycopeptides reveals prohormones as a novel class of proteoglycans.</title>
        <authorList>
            <person name="Noborn F."/>
            <person name="Gomez Toledo A."/>
            <person name="Sihlbom C."/>
            <person name="Lengqvist J."/>
            <person name="Fries E."/>
            <person name="Kjellen L."/>
            <person name="Nilsson J."/>
            <person name="Larson G."/>
        </authorList>
    </citation>
    <scope>SUBCELLULAR LOCATION</scope>
    <scope>TISSUE SPECIFICITY</scope>
    <scope>GLYCOSYLATION AT SER-702</scope>
</reference>
<reference key="7">
    <citation type="journal article" date="2017" name="J. Cell. Mol. Med.">
        <title>MXRA5 is a TGF-beta1-regulated human protein with anti-inflammatory and anti-fibrotic properties.</title>
        <authorList>
            <person name="Poveda J."/>
            <person name="Sanz A.B."/>
            <person name="Fernandez-Fernandez B."/>
            <person name="Carrasco S."/>
            <person name="Ruiz-Ortega M."/>
            <person name="Cannata-Ortiz P."/>
            <person name="Ortiz A."/>
            <person name="Sanchez-Nino M.D."/>
        </authorList>
    </citation>
    <scope>FUNCTION</scope>
    <scope>INDUCTION BY TGFB1</scope>
    <scope>TISSUE SPECIFICITY</scope>
    <scope>SUBCELLULAR LOCATION</scope>
</reference>
<reference key="8">
    <citation type="journal article" date="2020" name="Glycobiology">
        <title>An affinity chromatography and glycoproteomics workflow to profile the chondroitin sulfate proteoglycans that interact with malarial VAR2CSA in the placenta and in cancer.</title>
        <authorList>
            <person name="Toledo A.G."/>
            <person name="Pihl J."/>
            <person name="Spliid C.B."/>
            <person name="Persson A."/>
            <person name="Nilsson J."/>
            <person name="Pereira M.A."/>
            <person name="Gustavsson T."/>
            <person name="Choudhary S."/>
            <person name="Oo H.Z."/>
            <person name="Black P.C."/>
            <person name="Daugaard M."/>
            <person name="Esko J.D."/>
            <person name="Larson G."/>
            <person name="Salanti A."/>
            <person name="Clausen T.M."/>
        </authorList>
    </citation>
    <scope>TISSUE SPECIFICITY</scope>
    <scope>GLYCOSYLATION AT SER-702</scope>
</reference>
<reference key="9">
    <citation type="journal article" date="2022" name="J. Proteins Proteom.">
        <title>Mass spectrometric analysis of chondroitin sulfate-linked peptides.</title>
        <authorList>
            <person name="Ramarajan M.G."/>
            <person name="Saraswat M."/>
            <person name="Budhraja R."/>
            <person name="Garapati K."/>
            <person name="Raymond K."/>
            <person name="Pandey A."/>
        </authorList>
    </citation>
    <scope>TISSUE SPECIFICITY</scope>
    <scope>GLYCOSYLATION AT SER-702</scope>
</reference>
<reference key="10">
    <citation type="journal article" date="2012" name="Carcinogenesis">
        <title>Exome sequencing identifies MXRA5 as a novel cancer gene frequently mutated in non-small cell lung carcinoma from Chinese patients.</title>
        <authorList>
            <person name="Xiong D."/>
            <person name="Li G."/>
            <person name="Li K."/>
            <person name="Xu Q."/>
            <person name="Pan Z."/>
            <person name="Ding F."/>
            <person name="Vedell P."/>
            <person name="Liu P."/>
            <person name="Cui P."/>
            <person name="Hua X."/>
            <person name="Jiang H."/>
            <person name="Yin Y."/>
            <person name="Zhu Z."/>
            <person name="Li X."/>
            <person name="Zhang B."/>
            <person name="Ma D."/>
            <person name="Wang Y."/>
            <person name="You M."/>
        </authorList>
    </citation>
    <scope>VARIANTS LNCR ASP-98; HIS-481; CYS-611; ASN-862; PHE-1028; ALA-1491; HIS-2300; TRP-2349; ARG-2678; ALA-2716 AND GLY-2763</scope>
</reference>
<reference key="11">
    <citation type="journal article" date="2012" name="Transl. Psychiatry">
        <title>Analysis of the chromosome X exome in patients with autism spectrum disorders identified novel candidate genes, including TMLHE.</title>
        <authorList>
            <person name="Nava C."/>
            <person name="Lamari F."/>
            <person name="Heron D."/>
            <person name="Mignot C."/>
            <person name="Rastetter A."/>
            <person name="Keren B."/>
            <person name="Cohen D."/>
            <person name="Faudet A."/>
            <person name="Bouteiller D."/>
            <person name="Gilleron M."/>
            <person name="Jacquette A."/>
            <person name="Whalen S."/>
            <person name="Afenjar A."/>
            <person name="Perisse D."/>
            <person name="Laurent C."/>
            <person name="Dupuits C."/>
            <person name="Gautier C."/>
            <person name="Gerard M."/>
            <person name="Huguet G."/>
            <person name="Caillet S."/>
            <person name="Leheup B."/>
            <person name="Leboyer M."/>
            <person name="Gillberg C."/>
            <person name="Delorme R."/>
            <person name="Bourgeron T."/>
            <person name="Brice A."/>
            <person name="Depienne C."/>
        </authorList>
    </citation>
    <scope>VARIANTS HIS-1163 AND TRP-2663</scope>
</reference>
<reference key="12">
    <citation type="journal article" date="2016" name="J. Med. Genet.">
        <title>Homozygous missense mutation in the LMAN2L gene segregates with intellectual disability in a large consanguineous Pakistani family.</title>
        <authorList>
            <person name="Rafiullah R."/>
            <person name="Aslamkhan M."/>
            <person name="Paramasivam N."/>
            <person name="Thiel C."/>
            <person name="Mustafa G."/>
            <person name="Wiemann S."/>
            <person name="Schlesner M."/>
            <person name="Wade R.C."/>
            <person name="Rappold G.A."/>
            <person name="Berkel S."/>
        </authorList>
    </citation>
    <scope>VARIANT ASP-2426</scope>
</reference>
<organism>
    <name type="scientific">Homo sapiens</name>
    <name type="common">Human</name>
    <dbReference type="NCBI Taxonomy" id="9606"/>
    <lineage>
        <taxon>Eukaryota</taxon>
        <taxon>Metazoa</taxon>
        <taxon>Chordata</taxon>
        <taxon>Craniata</taxon>
        <taxon>Vertebrata</taxon>
        <taxon>Euteleostomi</taxon>
        <taxon>Mammalia</taxon>
        <taxon>Eutheria</taxon>
        <taxon>Euarchontoglires</taxon>
        <taxon>Primates</taxon>
        <taxon>Haplorrhini</taxon>
        <taxon>Catarrhini</taxon>
        <taxon>Hominidae</taxon>
        <taxon>Homo</taxon>
    </lineage>
</organism>
<comment type="function">
    <text evidence="9">In kidney, has anti-inflammatory and anti-fibrotic properties by limiting the induction of chemokines, fibronectin and collagen expression in response to TGB1 and pro-inflammatory stimuli.</text>
</comment>
<comment type="subcellular location">
    <subcellularLocation>
        <location evidence="7 9">Secreted</location>
    </subcellularLocation>
</comment>
<comment type="tissue specificity">
    <text evidence="7 9 10 11">Detected in placenta (at protein level) (PubMed:32337544). Detected in cerebrospinal fluid and fibroblasts (at protein level) (PubMed:25326458, PubMed:36213313). Highly expressed in kidney, also detected on liver and spleen (PubMed:27599751). Expressed by proximal tubular cells of the kidney (at protein level) (PubMed:27599751). Expression highly increases during chronic kidney disease and autosomal dominant polycystic kidney disease, where is detected in cysts (PubMed:27599751).</text>
</comment>
<comment type="developmental stage">
    <text evidence="4">Over-expressed in centenarians. Expression is reduced from young to old but increased from old to centenarians.</text>
</comment>
<comment type="induction">
    <text evidence="9">Expression is induced by TGFB1, in kidney tubular cells. This induction is inhibited by the vitamin D receptor activator paricalcitol (at protein level).</text>
</comment>
<comment type="disease" evidence="5">
    <disease id="DI-02205">
        <name>Lung cancer</name>
        <acronym>LNCR</acronym>
        <description>A common malignancy affecting tissues of the lung. The most common form of lung cancer is non-small cell lung cancer (NSCLC) that can be divided into 3 major histologic subtypes: squamous cell carcinoma, adenocarcinoma, and large cell lung cancer. NSCLC is often diagnosed at an advanced stage and has a poor prognosis.</description>
        <dbReference type="MIM" id="211980"/>
    </disease>
    <text>Disease susceptibility may be associated with variants affecting the gene represented in this entry.</text>
</comment>
<comment type="sequence caution" evidence="13">
    <conflict type="miscellaneous discrepancy">
        <sequence resource="EMBL-CDS" id="AAH11846"/>
    </conflict>
    <text>Contaminating sequence. Potential poly-A sequence.</text>
</comment>
<comment type="sequence caution" evidence="13">
    <conflict type="miscellaneous discrepancy">
        <sequence resource="EMBL-CDS" id="AAH64986"/>
    </conflict>
    <text>Contaminating sequence. Potential poly-A sequence.</text>
</comment>
<comment type="sequence caution" evidence="13">
    <conflict type="miscellaneous discrepancy">
        <sequence resource="EMBL-CDS" id="AAH80586"/>
    </conflict>
    <text>Contaminating sequence. Potential poly-A sequence.</text>
</comment>
<evidence type="ECO:0000255" key="1"/>
<evidence type="ECO:0000255" key="2">
    <source>
        <dbReference type="PROSITE-ProRule" id="PRU00114"/>
    </source>
</evidence>
<evidence type="ECO:0000256" key="3">
    <source>
        <dbReference type="SAM" id="MobiDB-lite"/>
    </source>
</evidence>
<evidence type="ECO:0000269" key="4">
    <source>
    </source>
</evidence>
<evidence type="ECO:0000269" key="5">
    <source>
    </source>
</evidence>
<evidence type="ECO:0000269" key="6">
    <source>
    </source>
</evidence>
<evidence type="ECO:0000269" key="7">
    <source>
    </source>
</evidence>
<evidence type="ECO:0000269" key="8">
    <source>
    </source>
</evidence>
<evidence type="ECO:0000269" key="9">
    <source>
    </source>
</evidence>
<evidence type="ECO:0000269" key="10">
    <source>
    </source>
</evidence>
<evidence type="ECO:0000269" key="11">
    <source>
    </source>
</evidence>
<evidence type="ECO:0000269" key="12">
    <source ref="1"/>
</evidence>
<evidence type="ECO:0000305" key="13"/>
<proteinExistence type="evidence at protein level"/>
<protein>
    <recommendedName>
        <fullName>Matrix-remodeling-associated protein 5</fullName>
    </recommendedName>
    <alternativeName>
        <fullName>Adhesion protein with leucine-rich repeats and immunoglobulin domains related to perlecan</fullName>
        <shortName>Adlican</shortName>
    </alternativeName>
</protein>
<sequence>MPKRAHWGALSVVLILLWGHPRVALACPHPCACYVPSEVHCTFRSLASVPAGIAKHVERINLGFNSIQALSETSFAGLTKLELLMIHGNEIPSIPDGALRDLSSLQVFKFSYNKLRVITGQTLQGLSNLMRLHIDHNKIEFIHPQAFNGLTSLRLLHLEGNLLHQLHPSTFSTFTFLDYFRLSTIRHLYLAENMVRTLPASMLRNMPLLENLYLQGNPWTCDCEMRWFLEWDAKSRGILKCKKDKAYEGGQLCAMCFSPKKLYKHEIHKLKDMTCLKPSIESPLRQNRSRSIEEEQEQEEDGGSQLILEKFQLPQWSISLNMTDEHGNMVNLVCDIKKPMDVYKIHLNQTDPPDIDINATVALDFECPMTRENYEKLWKLIAYYSEVPVKLHRELMLSKDPRVSYQYRQDADEEALYYTGVRAQILAEPEWVMQPSIDIQLNRRQSTAKKVLLSYYTQYSQTISTKDTRQARGRSWVMIEPSGAVQRDQTVLEGGPCQLSCNVKASESPSIFWVLPDGSILKAPMDDPDSKFSILSSGWLRIKSMEPSDSGLYQCIAQVRDEMDRMVYRVLVQSPSTQPAEKDTVTIGKNPGESVTLPCNALAIPEAHLSWILPNRRIINDLANTSHVYMLPNGTLSIPKVQVSDSGYYRCVAVNQQGADHFTVGITVTKKGSGLPSKRGRRPGAKALSRVREDIVEDEGGSGMGDEENTSRRLLHPKDQEVFLKTKDDAINGDKKAKKGRRKLKLWKHSEKEPETNVAEGRRVFESRRRINMANKQINPERWADILAKVRGKNLPKGTEVPPLIKTTSPPSLSLEVTPPFPAISPPSASPVQTVTSAEESSADVPLLGEEEHVLGTISSASMGLEHNHNGVILVEPEVTSTPLEEVVDDLSEKTEEITSTEGDLKGTAAPTLISEPYEPSPTLHTLDTVYEKPTHEETATEGWSAADVGSSPEPTSSEYEPPLDAVSLAESEPMQYFDPDLETKSQPDEDKMKEDTFAHLTPTPTIWVNDSSTSQLFEDSTIGEPGVPGQSHLQGLTDNIHLVKSSLSTQDTLLIKKGMKEMSQTLQGGNMLEGDPTHSRSSESEGQESKSITLPDSTLGIMSSMSPVKKPAETTVGTLLDKDTTTATTTPRQKVAPSSTMSTHPSRRRPNGRRRLRPNKFRHRHKQTPPTTFAPSETFSTQPTQAPDIKISSQVESSLVPTAWVDNTVNTPKQLEMEKNAEPTSKGTPRRKHGKRPNKHRYTPSTVSSRASGSKPSPSPENKHRNIVTPSSETILLPRTVSLKTEGPYDSLDYMTTTRKIYSSYPKVQETLPVTYKPTSDGKEIKDDVATNVDKHKSDILVTGESITNAIPTSRSLVSTMGEFKEESSPVGFPGTPTWNPSRTAQPGRLQTGIPVTTSGENLTDPPLLKELEDVDFTSEFLSSLTVSTPFHQEEAGSSTTLSSIKVEVASSQAETTTLDQDHLETTVAILLSETRPQNHTPTAARMKEPASSSPSTILMSLGQTTTTKPALPSPRISQASRDSKENVFLNYVGNPETEATPVNNEGTQHMSGPNELSTPSSDQDAFNLSTKLELEKQVFGSRSLPRGPDSQRQDGRVHASHQLTRVPAKPILPTATVRLPEMSTQSASRYFVTSQSPRHWTNKPEITTYPSGALPENKQFTTPRLSSTTIPLPLHMSKPSIPSKFTDRRTDQFNGYSKVFGNNNIPEARNPVGKPPSPRIPHYSNGRLPFFTNKTLSFPQLGVTRRPQIPTSPAPVMRERKVIPGSYNRIHSHSTFHLDFGPPAPPLLHTPQTTGSPSTNLQNIPMVSSTQSSISFITSSVQSSGSFHQSSSKFFAGGPPASKFWSLGEKPQILTKSPQTVSVTAETDTVFPCEATGKPKPFVTWTKVSTGALMTPNTRIQRFEVLKNGTLVIRKVQVQDRGQYMCTASNLHGLDRMVVLLSVTVQQPQILASHYQDVTVYLGDTIAMECLAKGTPAPQISWIFPDRRVWQTVSPVEGRITLHENRTLSIKEASFSDRGVYKCVASNAAGADSLAIRLHVAALPPVIHQEKLENISLPPGLSIHIHCTAKAAPLPSVRWVLGDGTQIRPSQFLHGNLFVFPNGTLYIRNLAPKDSGRYECVAANLVGSARRTVQLNVQRAAANARITGTSPRRTDVRYGGTLKLDCSASGDPWPRILWRLPSKRMIDALFSFDSRIKVFANGTLVVKSVTDKDAGDYLCVARNKVGDDYVVLKVDVVMKPAKIEHKEENDHKVFYGGDLKVDCVATGLPNPEISWSLPDGSLVNSFMQSDDSGGRTKRYVVFNNGTLYFNEVGMREEGDYTCFAENQVGKDEMRVRVKVVTAPATIRNKTYLAVQVPYGDVVTVACEAKGEPMPKVTWLSPTNKVIPTSSEKYQIYQDGTLLIQKAQRSDSGNYTCLVRNSAGEDRKTVWIHVNVQPPKINGNPNPITTVREIAAGGSRKLIDCKAEGIPTPRVLWAFPEGVVLPAPYYGNRITVHGNGSLDIRSLRKSDSVQLVCMARNEGGEARLILQLTVLEPMEKPIFHDPISEKITAMAGHTISLNCSAAGTPTPSLVWVLPNGTDLQSGQQLQRFYHKADGMLHISGLSSVDAGAYRCVARNAAGHTERLVSLKVGLKPEANKQYHNLVSIINGETLKLPCTPPGAGQGRFSWTLPNGMHLEGPQTLGRVSLLDNGTLTVREASVFDRGTYVCRMETEYGPSVTSIPVIVIAYPPRITSEPTPVIYTRPGNTVKLNCMAMGIPKADITWELPDKSHLKAGVQARLYGNRFLHPQGSLTIQHATQRDAGFYKCMAKNILGSDSKTTYIHVF</sequence>
<feature type="signal peptide" evidence="1">
    <location>
        <begin position="1"/>
        <end position="26"/>
    </location>
</feature>
<feature type="chain" id="PRO_0000254131" description="Matrix-remodeling-associated protein 5">
    <location>
        <begin position="27"/>
        <end position="2828"/>
    </location>
</feature>
<feature type="domain" description="LRRNT">
    <location>
        <begin position="27"/>
        <end position="55"/>
    </location>
</feature>
<feature type="repeat" description="LRR 1">
    <location>
        <begin position="56"/>
        <end position="77"/>
    </location>
</feature>
<feature type="repeat" description="LRR 2">
    <location>
        <begin position="80"/>
        <end position="101"/>
    </location>
</feature>
<feature type="repeat" description="LRR 3">
    <location>
        <begin position="104"/>
        <end position="125"/>
    </location>
</feature>
<feature type="repeat" description="LRR 4">
    <location>
        <begin position="128"/>
        <end position="149"/>
    </location>
</feature>
<feature type="repeat" description="LRR 5">
    <location>
        <begin position="152"/>
        <end position="173"/>
    </location>
</feature>
<feature type="repeat" description="LRR 6">
    <location>
        <begin position="184"/>
        <end position="205"/>
    </location>
</feature>
<feature type="domain" description="LRRCT">
    <location>
        <begin position="217"/>
        <end position="277"/>
    </location>
</feature>
<feature type="domain" description="Ig-like C2-type 1">
    <location>
        <begin position="481"/>
        <end position="571"/>
    </location>
</feature>
<feature type="domain" description="Ig-like C2-type 2">
    <location>
        <begin position="575"/>
        <end position="669"/>
    </location>
</feature>
<feature type="repeat" description="LRR 7">
    <location>
        <begin position="1410"/>
        <end position="1434"/>
    </location>
</feature>
<feature type="domain" description="Ig-like C2-type 3">
    <location>
        <begin position="1853"/>
        <end position="1946"/>
    </location>
</feature>
<feature type="domain" description="Ig-like C2-type 4">
    <location>
        <begin position="1950"/>
        <end position="2041"/>
    </location>
</feature>
<feature type="domain" description="Ig-like C2-type 5">
    <location>
        <begin position="2046"/>
        <end position="2140"/>
    </location>
</feature>
<feature type="domain" description="Ig-like C2-type 6">
    <location>
        <begin position="2146"/>
        <end position="2239"/>
    </location>
</feature>
<feature type="domain" description="Ig-like C2-type 7">
    <location>
        <begin position="2242"/>
        <end position="2343"/>
    </location>
</feature>
<feature type="domain" description="Ig-like C2-type 8">
    <location>
        <begin position="2345"/>
        <end position="2432"/>
    </location>
</feature>
<feature type="domain" description="Ig-like C2-type 9">
    <location>
        <begin position="2440"/>
        <end position="2534"/>
    </location>
</feature>
<feature type="domain" description="Ig-like C2-type 10">
    <location>
        <begin position="2542"/>
        <end position="2630"/>
    </location>
</feature>
<feature type="domain" description="Ig-like C2-type 11">
    <location>
        <begin position="2637"/>
        <end position="2722"/>
    </location>
</feature>
<feature type="domain" description="Ig-like C2-type 12">
    <location>
        <begin position="2733"/>
        <end position="2828"/>
    </location>
</feature>
<feature type="region of interest" description="Disordered" evidence="3">
    <location>
        <begin position="671"/>
        <end position="715"/>
    </location>
</feature>
<feature type="region of interest" description="Disordered" evidence="3">
    <location>
        <begin position="933"/>
        <end position="962"/>
    </location>
</feature>
<feature type="region of interest" description="Disordered" evidence="3">
    <location>
        <begin position="1068"/>
        <end position="1190"/>
    </location>
</feature>
<feature type="region of interest" description="Disordered" evidence="3">
    <location>
        <begin position="1204"/>
        <end position="1275"/>
    </location>
</feature>
<feature type="region of interest" description="Disordered" evidence="3">
    <location>
        <begin position="1367"/>
        <end position="1389"/>
    </location>
</feature>
<feature type="region of interest" description="Disordered" evidence="3">
    <location>
        <begin position="1479"/>
        <end position="1499"/>
    </location>
</feature>
<feature type="region of interest" description="Disordered" evidence="3">
    <location>
        <begin position="1536"/>
        <end position="1566"/>
    </location>
</feature>
<feature type="region of interest" description="Disordered" evidence="3">
    <location>
        <begin position="1579"/>
        <end position="1603"/>
    </location>
</feature>
<feature type="region of interest" description="Disordered" evidence="3">
    <location>
        <begin position="1669"/>
        <end position="1689"/>
    </location>
</feature>
<feature type="region of interest" description="Disordered" evidence="3">
    <location>
        <begin position="1700"/>
        <end position="1719"/>
    </location>
</feature>
<feature type="compositionally biased region" description="Acidic residues" evidence="3">
    <location>
        <begin position="695"/>
        <end position="708"/>
    </location>
</feature>
<feature type="compositionally biased region" description="Low complexity" evidence="3">
    <location>
        <begin position="951"/>
        <end position="962"/>
    </location>
</feature>
<feature type="compositionally biased region" description="Polar residues" evidence="3">
    <location>
        <begin position="1090"/>
        <end position="1107"/>
    </location>
</feature>
<feature type="compositionally biased region" description="Basic residues" evidence="3">
    <location>
        <begin position="1146"/>
        <end position="1168"/>
    </location>
</feature>
<feature type="compositionally biased region" description="Polar residues" evidence="3">
    <location>
        <begin position="1169"/>
        <end position="1190"/>
    </location>
</feature>
<feature type="compositionally biased region" description="Polar residues" evidence="3">
    <location>
        <begin position="1204"/>
        <end position="1214"/>
    </location>
</feature>
<feature type="compositionally biased region" description="Basic residues" evidence="3">
    <location>
        <begin position="1229"/>
        <end position="1243"/>
    </location>
</feature>
<feature type="compositionally biased region" description="Polar residues" evidence="3">
    <location>
        <begin position="1542"/>
        <end position="1566"/>
    </location>
</feature>
<feature type="glycosylation site" description="N-linked (GlcNAc...) asparagine" evidence="1">
    <location>
        <position position="287"/>
    </location>
</feature>
<feature type="glycosylation site" description="N-linked (GlcNAc...) asparagine" evidence="1">
    <location>
        <position position="321"/>
    </location>
</feature>
<feature type="glycosylation site" description="N-linked (GlcNAc...) asparagine" evidence="1">
    <location>
        <position position="633"/>
    </location>
</feature>
<feature type="glycosylation site" description="O-linked (Xyl...) (chondroitin sulfate) serine" evidence="7 10 11">
    <location>
        <position position="702"/>
    </location>
</feature>
<feature type="glycosylation site" description="N-linked (GlcNAc...) asparagine" evidence="1">
    <location>
        <position position="1403"/>
    </location>
</feature>
<feature type="glycosylation site" description="N-linked (GlcNAc...) asparagine" evidence="1">
    <location>
        <position position="1735"/>
    </location>
</feature>
<feature type="glycosylation site" description="N-linked (GlcNAc...) asparagine" evidence="1">
    <location>
        <position position="2007"/>
    </location>
</feature>
<feature type="glycosylation site" description="N-linked (GlcNAc...) asparagine" evidence="1">
    <location>
        <position position="2056"/>
    </location>
</feature>
<feature type="glycosylation site" description="N-linked (GlcNAc...) asparagine" evidence="1">
    <location>
        <position position="2693"/>
    </location>
</feature>
<feature type="disulfide bond" evidence="2">
    <location>
        <begin position="501"/>
        <end position="555"/>
    </location>
</feature>
<feature type="disulfide bond" evidence="2">
    <location>
        <begin position="599"/>
        <end position="651"/>
    </location>
</feature>
<feature type="disulfide bond" evidence="2">
    <location>
        <begin position="1875"/>
        <end position="1928"/>
    </location>
</feature>
<feature type="disulfide bond" evidence="2">
    <location>
        <begin position="1972"/>
        <end position="2025"/>
    </location>
</feature>
<feature type="disulfide bond" evidence="2">
    <location>
        <begin position="2069"/>
        <end position="2122"/>
    </location>
</feature>
<feature type="disulfide bond" evidence="2">
    <location>
        <begin position="2168"/>
        <end position="2221"/>
    </location>
</feature>
<feature type="disulfide bond" evidence="2">
    <location>
        <begin position="2265"/>
        <end position="2324"/>
    </location>
</feature>
<feature type="disulfide bond" evidence="2">
    <location>
        <begin position="2368"/>
        <end position="2418"/>
    </location>
</feature>
<feature type="disulfide bond" evidence="2">
    <location>
        <begin position="2466"/>
        <end position="2518"/>
    </location>
</feature>
<feature type="disulfide bond" evidence="2">
    <location>
        <begin position="2564"/>
        <end position="2616"/>
    </location>
</feature>
<feature type="disulfide bond" evidence="2">
    <location>
        <begin position="2659"/>
        <end position="2711"/>
    </location>
</feature>
<feature type="disulfide bond" evidence="2">
    <location>
        <begin position="2755"/>
        <end position="2810"/>
    </location>
</feature>
<feature type="sequence variant" id="VAR_072405" description="In LNCR; uncertain significance; dbSNP:rs1921642741." evidence="5">
    <original>A</original>
    <variation>D</variation>
    <location>
        <position position="98"/>
    </location>
</feature>
<feature type="sequence variant" id="VAR_072406" description="In LNCR; uncertain significance; dbSNP:rs759222135." evidence="5">
    <original>P</original>
    <variation>H</variation>
    <location>
        <position position="481"/>
    </location>
</feature>
<feature type="sequence variant" id="VAR_072407" description="In LNCR; uncertain significance." evidence="5">
    <original>W</original>
    <variation>C</variation>
    <location>
        <position position="611"/>
    </location>
</feature>
<feature type="sequence variant" id="VAR_056057" description="In dbSNP:rs5983120.">
    <original>V</original>
    <variation>L</variation>
    <location>
        <position position="764"/>
    </location>
</feature>
<feature type="sequence variant" id="VAR_060357" description="In dbSNP:rs5983119." evidence="12">
    <original>I</original>
    <variation>V</variation>
    <location>
        <position position="824"/>
    </location>
</feature>
<feature type="sequence variant" id="VAR_072408" description="In LNCR." evidence="5">
    <original>S</original>
    <variation>N</variation>
    <location>
        <position position="862"/>
    </location>
</feature>
<feature type="sequence variant" id="VAR_072409" description="In LNCR; uncertain significance." evidence="5">
    <original>V</original>
    <variation>F</variation>
    <location>
        <position position="1028"/>
    </location>
</feature>
<feature type="sequence variant" id="VAR_060358" description="In dbSNP:rs1635246." evidence="12">
    <original>A</original>
    <variation>V</variation>
    <location>
        <position position="1128"/>
    </location>
</feature>
<feature type="sequence variant" id="VAR_076257" description="In dbSNP:rs139106444." evidence="6">
    <original>R</original>
    <variation>H</variation>
    <location>
        <position position="1163"/>
    </location>
</feature>
<feature type="sequence variant" id="VAR_060359" description="In dbSNP:rs1726199." evidence="12">
    <original>G</original>
    <variation>D</variation>
    <location>
        <position position="1394"/>
    </location>
</feature>
<feature type="sequence variant" id="VAR_056058" description="In dbSNP:rs12396910.">
    <original>T</original>
    <variation>A</variation>
    <location>
        <position position="1484"/>
    </location>
</feature>
<feature type="sequence variant" id="VAR_072410" description="In LNCR; uncertain significance; dbSNP:rs754393038." evidence="5">
    <original>P</original>
    <variation>A</variation>
    <location>
        <position position="1491"/>
    </location>
</feature>
<feature type="sequence variant" id="VAR_056059" description="In dbSNP:rs1974522.">
    <original>P</original>
    <variation>S</variation>
    <location>
        <position position="1665"/>
    </location>
</feature>
<feature type="sequence variant" id="VAR_060360" description="In dbSNP:rs1635242." evidence="12">
    <original>G</original>
    <variation>S</variation>
    <location>
        <position position="2000"/>
    </location>
</feature>
<feature type="sequence variant" id="VAR_072411" description="In LNCR; uncertain significance; dbSNP:rs776590689." evidence="5">
    <original>R</original>
    <variation>H</variation>
    <location>
        <position position="2300"/>
    </location>
</feature>
<feature type="sequence variant" id="VAR_072412" description="In LNCR; uncertain significance; dbSNP:rs369042203." evidence="5">
    <original>R</original>
    <variation>W</variation>
    <location>
        <position position="2349"/>
    </location>
</feature>
<feature type="sequence variant" id="VAR_076437" description="In dbSNP:rs148675322." evidence="8">
    <original>E</original>
    <variation>D</variation>
    <location>
        <position position="2426"/>
    </location>
</feature>
<feature type="sequence variant" id="VAR_028821" description="In dbSNP:rs1726208." evidence="12">
    <original>L</original>
    <variation>V</variation>
    <location>
        <position position="2531"/>
    </location>
</feature>
<feature type="sequence variant" id="VAR_076258" description="In dbSNP:rs143264543." evidence="6">
    <original>G</original>
    <variation>W</variation>
    <location>
        <position position="2663"/>
    </location>
</feature>
<feature type="sequence variant" id="VAR_072413" description="In LNCR; uncertain significance." evidence="5">
    <original>H</original>
    <variation>R</variation>
    <location>
        <position position="2678"/>
    </location>
</feature>
<feature type="sequence variant" id="VAR_072414" description="In LNCR; uncertain significance; dbSNP:rs1419255508." evidence="5">
    <original>E</original>
    <variation>A</variation>
    <location>
        <position position="2716"/>
    </location>
</feature>
<feature type="sequence variant" id="VAR_072415" description="In LNCR; uncertain significance." evidence="5">
    <original>A</original>
    <variation>G</variation>
    <location>
        <position position="2763"/>
    </location>
</feature>
<feature type="sequence conflict" description="In Ref. 1; AAF86402." evidence="13" ref="1">
    <original>K</original>
    <variation>R</variation>
    <location>
        <position position="55"/>
    </location>
</feature>
<feature type="sequence conflict" description="In Ref. 1; AAF86402." evidence="13" ref="1">
    <original>Q</original>
    <variation>R</variation>
    <location>
        <position position="1565"/>
    </location>
</feature>
<feature type="sequence conflict" description="In Ref. 5; CAB43220." evidence="13" ref="5">
    <original>I</original>
    <variation>V</variation>
    <location>
        <position position="2245"/>
    </location>
</feature>
<feature type="sequence conflict" description="In Ref. 5; CAB43220." evidence="13" ref="5">
    <original>Y</original>
    <variation>C</variation>
    <location>
        <position position="2353"/>
    </location>
</feature>
<feature type="sequence conflict" description="In Ref. 5; CAB43220." evidence="13" ref="5">
    <original>N</original>
    <variation>S</variation>
    <location>
        <position position="2640"/>
    </location>
</feature>